<feature type="chain" id="PRO_0000128971" description="DNA-directed RNA polymerase subunit omega">
    <location>
        <begin position="1"/>
        <end position="127"/>
    </location>
</feature>
<gene>
    <name type="primary">rpoZ</name>
    <name type="ordered locus">RP578</name>
</gene>
<evidence type="ECO:0000250" key="1"/>
<evidence type="ECO:0000305" key="2"/>
<proteinExistence type="inferred from homology"/>
<organism>
    <name type="scientific">Rickettsia prowazekii (strain Madrid E)</name>
    <dbReference type="NCBI Taxonomy" id="272947"/>
    <lineage>
        <taxon>Bacteria</taxon>
        <taxon>Pseudomonadati</taxon>
        <taxon>Pseudomonadota</taxon>
        <taxon>Alphaproteobacteria</taxon>
        <taxon>Rickettsiales</taxon>
        <taxon>Rickettsiaceae</taxon>
        <taxon>Rickettsieae</taxon>
        <taxon>Rickettsia</taxon>
        <taxon>typhus group</taxon>
    </lineage>
</organism>
<reference key="1">
    <citation type="journal article" date="1998" name="Nature">
        <title>The genome sequence of Rickettsia prowazekii and the origin of mitochondria.</title>
        <authorList>
            <person name="Andersson S.G.E."/>
            <person name="Zomorodipour A."/>
            <person name="Andersson J.O."/>
            <person name="Sicheritz-Ponten T."/>
            <person name="Alsmark U.C.M."/>
            <person name="Podowski R.M."/>
            <person name="Naeslund A.K."/>
            <person name="Eriksson A.-S."/>
            <person name="Winkler H.H."/>
            <person name="Kurland C.G."/>
        </authorList>
    </citation>
    <scope>NUCLEOTIDE SEQUENCE [LARGE SCALE GENOMIC DNA]</scope>
    <source>
        <strain>Madrid E</strain>
    </source>
</reference>
<comment type="function">
    <text evidence="1">Promotes RNA polymerase assembly. Latches the N- and C-terminal regions of the beta' subunit thereby facilitating its interaction with the beta and alpha subunits (By similarity).</text>
</comment>
<comment type="catalytic activity">
    <reaction>
        <text>RNA(n) + a ribonucleoside 5'-triphosphate = RNA(n+1) + diphosphate</text>
        <dbReference type="Rhea" id="RHEA:21248"/>
        <dbReference type="Rhea" id="RHEA-COMP:14527"/>
        <dbReference type="Rhea" id="RHEA-COMP:17342"/>
        <dbReference type="ChEBI" id="CHEBI:33019"/>
        <dbReference type="ChEBI" id="CHEBI:61557"/>
        <dbReference type="ChEBI" id="CHEBI:140395"/>
        <dbReference type="EC" id="2.7.7.6"/>
    </reaction>
</comment>
<comment type="subunit">
    <text evidence="1">The RNAP catalytic core consists of 2 alpha, 1 beta, 1 beta' and 1 omega subunit. When a sigma factor is associated with the core the holoenzyme is formed, which can initiate transcription (By similarity).</text>
</comment>
<comment type="similarity">
    <text evidence="2">Belongs to the RNA polymerase subunit omega family.</text>
</comment>
<accession>Q9ZCX4</accession>
<protein>
    <recommendedName>
        <fullName>DNA-directed RNA polymerase subunit omega</fullName>
        <shortName>RNAP omega subunit</shortName>
        <ecNumber>2.7.7.6</ecNumber>
    </recommendedName>
    <alternativeName>
        <fullName>RNA polymerase omega subunit</fullName>
    </alternativeName>
    <alternativeName>
        <fullName>Transcriptase subunit omega</fullName>
    </alternativeName>
</protein>
<name>RPOZ_RICPR</name>
<keyword id="KW-0240">DNA-directed RNA polymerase</keyword>
<keyword id="KW-0548">Nucleotidyltransferase</keyword>
<keyword id="KW-1185">Reference proteome</keyword>
<keyword id="KW-0804">Transcription</keyword>
<keyword id="KW-0808">Transferase</keyword>
<dbReference type="EC" id="2.7.7.6"/>
<dbReference type="EMBL" id="AJ235272">
    <property type="protein sequence ID" value="CAA15025.1"/>
    <property type="molecule type" value="Genomic_DNA"/>
</dbReference>
<dbReference type="PIR" id="G71662">
    <property type="entry name" value="G71662"/>
</dbReference>
<dbReference type="RefSeq" id="NP_220949.1">
    <property type="nucleotide sequence ID" value="NC_000963.1"/>
</dbReference>
<dbReference type="RefSeq" id="WP_004597892.1">
    <property type="nucleotide sequence ID" value="NC_000963.1"/>
</dbReference>
<dbReference type="SMR" id="Q9ZCX4"/>
<dbReference type="STRING" id="272947.gene:17555658"/>
<dbReference type="EnsemblBacteria" id="CAA15025">
    <property type="protein sequence ID" value="CAA15025"/>
    <property type="gene ID" value="CAA15025"/>
</dbReference>
<dbReference type="GeneID" id="57569704"/>
<dbReference type="KEGG" id="rpr:RP578"/>
<dbReference type="PATRIC" id="fig|272947.5.peg.595"/>
<dbReference type="eggNOG" id="COG1758">
    <property type="taxonomic scope" value="Bacteria"/>
</dbReference>
<dbReference type="HOGENOM" id="CLU_138545_0_0_5"/>
<dbReference type="OrthoDB" id="9796300at2"/>
<dbReference type="Proteomes" id="UP000002480">
    <property type="component" value="Chromosome"/>
</dbReference>
<dbReference type="GO" id="GO:0000428">
    <property type="term" value="C:DNA-directed RNA polymerase complex"/>
    <property type="evidence" value="ECO:0007669"/>
    <property type="project" value="UniProtKB-KW"/>
</dbReference>
<dbReference type="GO" id="GO:0003677">
    <property type="term" value="F:DNA binding"/>
    <property type="evidence" value="ECO:0007669"/>
    <property type="project" value="UniProtKB-UniRule"/>
</dbReference>
<dbReference type="GO" id="GO:0003899">
    <property type="term" value="F:DNA-directed RNA polymerase activity"/>
    <property type="evidence" value="ECO:0007669"/>
    <property type="project" value="UniProtKB-UniRule"/>
</dbReference>
<dbReference type="GO" id="GO:0006351">
    <property type="term" value="P:DNA-templated transcription"/>
    <property type="evidence" value="ECO:0007669"/>
    <property type="project" value="UniProtKB-UniRule"/>
</dbReference>
<dbReference type="Gene3D" id="3.90.940.10">
    <property type="match status" value="1"/>
</dbReference>
<dbReference type="HAMAP" id="MF_00366">
    <property type="entry name" value="RNApol_bact_RpoZ"/>
    <property type="match status" value="1"/>
</dbReference>
<dbReference type="InterPro" id="IPR003716">
    <property type="entry name" value="DNA-dir_RNA_pol_omega"/>
</dbReference>
<dbReference type="InterPro" id="IPR006110">
    <property type="entry name" value="Pol_omega/Rpo6/RPB6"/>
</dbReference>
<dbReference type="InterPro" id="IPR036161">
    <property type="entry name" value="RPB6/omega-like_sf"/>
</dbReference>
<dbReference type="NCBIfam" id="TIGR00690">
    <property type="entry name" value="rpoZ"/>
    <property type="match status" value="1"/>
</dbReference>
<dbReference type="PANTHER" id="PTHR34476">
    <property type="entry name" value="DNA-DIRECTED RNA POLYMERASE SUBUNIT OMEGA"/>
    <property type="match status" value="1"/>
</dbReference>
<dbReference type="PANTHER" id="PTHR34476:SF1">
    <property type="entry name" value="DNA-DIRECTED RNA POLYMERASE SUBUNIT OMEGA"/>
    <property type="match status" value="1"/>
</dbReference>
<dbReference type="Pfam" id="PF01192">
    <property type="entry name" value="RNA_pol_Rpb6"/>
    <property type="match status" value="1"/>
</dbReference>
<dbReference type="SMART" id="SM01409">
    <property type="entry name" value="RNA_pol_Rpb6"/>
    <property type="match status" value="1"/>
</dbReference>
<dbReference type="SUPFAM" id="SSF63562">
    <property type="entry name" value="RPB6/omega subunit-like"/>
    <property type="match status" value="1"/>
</dbReference>
<sequence>MARITAEDCNKIIPDRFRLVVLATRYAKLLNYKVETNQIKKEKRDKPPVISLRRIAAGKVSVPQLEQDLINSLRTRMMIEPLINQDESEDVEEKFEYLPEVYIGEDYSDLDDQIFINENGEDYETDK</sequence>